<proteinExistence type="evidence at protein level"/>
<dbReference type="EMBL" id="M88749">
    <property type="protein sequence ID" value="AAA49327.1"/>
    <property type="molecule type" value="mRNA"/>
</dbReference>
<dbReference type="PIR" id="S28974">
    <property type="entry name" value="S28974"/>
</dbReference>
<dbReference type="PDB" id="1LSH">
    <property type="method" value="X-ray"/>
    <property type="resolution" value="1.90 A"/>
    <property type="chains" value="A=18-1072, B=1306-1624"/>
</dbReference>
<dbReference type="PDBsum" id="1LSH"/>
<dbReference type="SMR" id="Q91062"/>
<dbReference type="EvolutionaryTrace" id="Q91062"/>
<dbReference type="GO" id="GO:0005319">
    <property type="term" value="F:lipid transporter activity"/>
    <property type="evidence" value="ECO:0007669"/>
    <property type="project" value="InterPro"/>
</dbReference>
<dbReference type="GO" id="GO:0045735">
    <property type="term" value="F:nutrient reservoir activity"/>
    <property type="evidence" value="ECO:0007669"/>
    <property type="project" value="UniProtKB-KW"/>
</dbReference>
<dbReference type="GO" id="GO:0071391">
    <property type="term" value="P:cellular response to estrogen stimulus"/>
    <property type="evidence" value="ECO:0007669"/>
    <property type="project" value="TreeGrafter"/>
</dbReference>
<dbReference type="GO" id="GO:0032355">
    <property type="term" value="P:response to estradiol"/>
    <property type="evidence" value="ECO:0007669"/>
    <property type="project" value="TreeGrafter"/>
</dbReference>
<dbReference type="Gene3D" id="2.30.230.10">
    <property type="entry name" value="Lipovitellin, beta-sheet shell regions, chain A"/>
    <property type="match status" value="1"/>
</dbReference>
<dbReference type="Gene3D" id="2.20.80.10">
    <property type="entry name" value="Lipovitellin-phosvitin complex, chain A, domain 4"/>
    <property type="match status" value="1"/>
</dbReference>
<dbReference type="Gene3D" id="2.20.50.20">
    <property type="entry name" value="Lipovitellin. Chain A, domain 3"/>
    <property type="match status" value="2"/>
</dbReference>
<dbReference type="Gene3D" id="2.20.90.10">
    <property type="entry name" value="Vitellinogen, beta-sheet shell domain"/>
    <property type="match status" value="1"/>
</dbReference>
<dbReference type="Gene3D" id="1.25.10.20">
    <property type="entry name" value="Vitellinogen, superhelical"/>
    <property type="match status" value="1"/>
</dbReference>
<dbReference type="InterPro" id="IPR015819">
    <property type="entry name" value="Lipid_transp_b-sht_shell"/>
</dbReference>
<dbReference type="InterPro" id="IPR011030">
    <property type="entry name" value="Lipovitellin_superhlx_dom"/>
</dbReference>
<dbReference type="InterPro" id="IPR015816">
    <property type="entry name" value="Vitellinogen_b-sht_N"/>
</dbReference>
<dbReference type="InterPro" id="IPR015258">
    <property type="entry name" value="Vitellinogen_b-sht_shell"/>
</dbReference>
<dbReference type="InterPro" id="IPR037088">
    <property type="entry name" value="Vitellinogen_b-sht_shell_sf"/>
</dbReference>
<dbReference type="InterPro" id="IPR015255">
    <property type="entry name" value="Vitellinogen_open_b-sht"/>
</dbReference>
<dbReference type="InterPro" id="IPR015817">
    <property type="entry name" value="Vitellinogen_open_b-sht_sub1"/>
</dbReference>
<dbReference type="InterPro" id="IPR050733">
    <property type="entry name" value="Vitellogenin/Apolipophorin"/>
</dbReference>
<dbReference type="InterPro" id="IPR001747">
    <property type="entry name" value="Vitellogenin_N"/>
</dbReference>
<dbReference type="InterPro" id="IPR001846">
    <property type="entry name" value="VWF_type-D"/>
</dbReference>
<dbReference type="PANTHER" id="PTHR23345:SF15">
    <property type="entry name" value="VITELLOGENIN 1-RELATED"/>
    <property type="match status" value="1"/>
</dbReference>
<dbReference type="PANTHER" id="PTHR23345">
    <property type="entry name" value="VITELLOGENIN-RELATED"/>
    <property type="match status" value="1"/>
</dbReference>
<dbReference type="Pfam" id="PF09175">
    <property type="entry name" value="Vit_b-sht_shell"/>
    <property type="match status" value="1"/>
</dbReference>
<dbReference type="Pfam" id="PF09172">
    <property type="entry name" value="Vit_open_b-sht"/>
    <property type="match status" value="1"/>
</dbReference>
<dbReference type="Pfam" id="PF01347">
    <property type="entry name" value="Vitellogenin_N"/>
    <property type="match status" value="1"/>
</dbReference>
<dbReference type="Pfam" id="PF00094">
    <property type="entry name" value="VWD"/>
    <property type="match status" value="1"/>
</dbReference>
<dbReference type="SMART" id="SM01169">
    <property type="entry name" value="DUF1943"/>
    <property type="match status" value="1"/>
</dbReference>
<dbReference type="SMART" id="SM01170">
    <property type="entry name" value="DUF1944"/>
    <property type="match status" value="1"/>
</dbReference>
<dbReference type="SMART" id="SM00638">
    <property type="entry name" value="LPD_N"/>
    <property type="match status" value="1"/>
</dbReference>
<dbReference type="SMART" id="SM00216">
    <property type="entry name" value="VWD"/>
    <property type="match status" value="1"/>
</dbReference>
<dbReference type="SUPFAM" id="SSF56968">
    <property type="entry name" value="Lipovitellin-phosvitin complex, beta-sheet shell regions"/>
    <property type="match status" value="3"/>
</dbReference>
<dbReference type="SUPFAM" id="SSF48431">
    <property type="entry name" value="Lipovitellin-phosvitin complex, superhelical domain"/>
    <property type="match status" value="1"/>
</dbReference>
<dbReference type="PROSITE" id="PS51211">
    <property type="entry name" value="VITELLOGENIN"/>
    <property type="match status" value="1"/>
</dbReference>
<dbReference type="PROSITE" id="PS51233">
    <property type="entry name" value="VWFD"/>
    <property type="match status" value="1"/>
</dbReference>
<keyword id="KW-0002">3D-structure</keyword>
<keyword id="KW-0903">Direct protein sequencing</keyword>
<keyword id="KW-1015">Disulfide bond</keyword>
<keyword id="KW-0325">Glycoprotein</keyword>
<keyword id="KW-0597">Phosphoprotein</keyword>
<keyword id="KW-0873">Pyrrolidone carboxylic acid</keyword>
<keyword id="KW-0732">Signal</keyword>
<keyword id="KW-0758">Storage protein</keyword>
<protein>
    <recommendedName>
        <fullName>Vitellogenin</fullName>
        <shortName>VTG</shortName>
    </recommendedName>
    <component>
        <recommendedName>
            <fullName>Lipovitellin LV-1N</fullName>
        </recommendedName>
    </component>
    <component>
        <recommendedName>
            <fullName>Lipovitellin LV-1C</fullName>
        </recommendedName>
    </component>
    <component>
        <recommendedName>
            <fullName>Lipovitellin LV-2</fullName>
        </recommendedName>
    </component>
</protein>
<name>VIT_ICHUN</name>
<reference key="1">
    <citation type="journal article" date="1992" name="J. Mol. Biol.">
        <title>Sequence of lamprey vitellogenin. Implications for the lipovitellin crystal structure.</title>
        <authorList>
            <person name="Sharrock W.J."/>
            <person name="Rosenwasser T.A."/>
            <person name="Gould J."/>
            <person name="Knott J."/>
            <person name="Hussey D."/>
            <person name="Gordon J.I."/>
            <person name="Banaszak L.J."/>
        </authorList>
    </citation>
    <scope>NUCLEOTIDE SEQUENCE [MRNA]</scope>
    <scope>PROTEIN SEQUENCE OF 708-714 AND 1306-1314</scope>
    <source>
        <tissue>Liver</tissue>
    </source>
</reference>
<reference key="2">
    <citation type="journal article" date="1988" name="J. Mol. Biol.">
        <title>Structure of the lamprey yolk lipid-protein complex lipovitellin-phosvitin at 2.8-A resolution.</title>
        <authorList>
            <person name="Raag R."/>
            <person name="Appelt K."/>
            <person name="Xuong N.-H."/>
            <person name="Banaszak L.J."/>
        </authorList>
    </citation>
    <scope>X-RAY CRYSTALLOGRAPHY (2.8 AND 6.0 ANGSTROMS)</scope>
</reference>
<reference key="3">
    <citation type="journal article" date="2002" name="Biochemistry">
        <title>Lipid-protein interactions in lipovitellin.</title>
        <authorList>
            <person name="Thompson J.R."/>
            <person name="Banaszak L.J."/>
        </authorList>
    </citation>
    <scope>X-RAY CRYSTALLOGRAPHY (1.90 ANGSTROMS) OF 17-1072 AND 1306-1624</scope>
    <scope>PYROGLUTAMATE FORMATION AT GLN-17</scope>
</reference>
<evidence type="ECO:0000255" key="1"/>
<evidence type="ECO:0000255" key="2">
    <source>
        <dbReference type="PROSITE-ProRule" id="PRU00557"/>
    </source>
</evidence>
<evidence type="ECO:0000255" key="3">
    <source>
        <dbReference type="PROSITE-ProRule" id="PRU00580"/>
    </source>
</evidence>
<evidence type="ECO:0000256" key="4">
    <source>
        <dbReference type="SAM" id="MobiDB-lite"/>
    </source>
</evidence>
<evidence type="ECO:0000269" key="5">
    <source>
    </source>
</evidence>
<evidence type="ECO:0007829" key="6">
    <source>
        <dbReference type="PDB" id="1LSH"/>
    </source>
</evidence>
<accession>Q91062</accession>
<sequence length="1823" mass="199945">MWKLLLVALAFALADAQFQPGKVYRYSYDAFSISGLPEPGVNRAGLSGEMKIEIHGHTHNQATLKITQVNLKYFLGPWPSDSFYPLTAGYDHFIQQLEVPVRFDYSAGRIGDIYAPPQVTDTAVNIVRGILNLFQLSLKKNQQTFELQETGVEGICQTTYVVQEGYRTNEMAVVKTKDLNNCDHKVYKTMGTAYAERCPTCQKMNKNLRSTAVYNYAIFDEPSGYIIKSAHSEEIQQLSVFDIKEGNVVIESRQKLILEGIQSAPAASQAASLQNRGGLMYKFPSSAITKMSSLFVTKGKNLESEIHTVLKHLVENNQLSVHEDAPAKFLRLTAFLRNVDAGVLQSIWHKLHQQKDYRRWILDAVPAMATSEALLFLKRTLASEQLTSAEATQIVYSTLSNQQATRESLSYARELLHTSFIRNRPILRKTAVLGYGSLVFRYCANTVSCPDELLQPLHDLLSQSSDRADEEEIVLALKALGNAGQPNSIKKIQRFLPGQGKSLDEYSTRVQAEAIMALRNIAKRDPRKVQEIVLPIFLNVAIKSELRIRSCIVFFESKPSVALVSMVAVRLRREPNLQVASFVYSQMRSLSRSSNPEFRDVAAACSVAIKMLGSKLDRLGCRYSKAVHVDTFNARTMAGVSADYFRINSPSGPLPRAVAAKIRGQGMGYASDIVEFGLRAEGLQELLYRGSQEQDAYGTALDRQTLLRSGQARSHVSSIHDTLRKLSDWKSVPEERPLASGYVKVHGQEVVFAELDKKMMQRISQLWHSARSHHAAAQEQIRAVVSKLEQGMDVLLTKGYVVSEVRYMQPVCIGIPMDLNLLVSGVTTNRANLHASFSQSLPADMKLADLLATNIELRVAATTSMSQHAVAIMGLTTDLAKAGMQTHYKTSAGLGVNGKIEMNARESNFKASLKPFQQKTVVVLSTMESIVFVRDPSGSRILPVLPPKMTLDKGLISQQQQQPHHQQQPHQHGQDQARAAYQRPWASHEFSPAEQKQIHDIMTARPVMRRKQHCSKSAALSSKVCFSARLRNAAFIRNALLYKITGDYVSKVYVQPTSSKAQIQKVELELQAGPQAAEKVIRMVELVAKASKKSKKNSTITEEGVGETIISQLKKILSSDKDKDAKKPPGSSSSSSSSSSSSSSSSSSDKSGKKTPRQGSTVNLAAKRASKKQRGKDSSSSSSSSSSSSDSSKSPHKHGGAKRQHAGHGAPHLGPQSHSSSSSSSSSSSSSSASKSFSTVKPPMTRKPRPARSSSSSSSSDSSSSSSSSSSSSSSSSSSSSSSSESKSLEWLAVKDVNQSAFYNFKYVPQRKPQTSRRHTPASSSSSSSSSSSSSSSSSSSDSDMTVSAESFEKHSKPKVVIVLRAVRADGKQQGLQTTLYYGLTSNGLPKAKIVAVELSDLSVWKLCAKFRLSAHMKAKAAIGWGKNCQQYRAMLEASTGNLQSHPAARVDIKWGRLPSSLQRAKNALLENKAPVIASKLEMEIMPKKNQKHQVSVILAAMTPRRMNIIVKLPKVTYFQQGILLPFTFPSPRFWDRPEGSQSDSLPAQIASAFSGIVQDPVASACELNEQSLTTFNGAFFNYDMPESCYHVLAQECSSRPPFIVLIKLDSERRISLELQLDDKKVKIVSRNDIRVDGEKVPLRRLSQKNQYGFLVLDAGVHLLLKYKDLRVSFNSSSVQVWVPSSLKGQTCGLCGRNDDELVTEMRMPNLEVAKDFTSFAHSWIAPDETCGGACALSRQTVHKESTSVISGSRENCYSTEPIMRCPATCSASRSVPVSVAMHCLPAESEAISLAMSEGRPFSLSGKSEDLVTEMEAHVSCVA</sequence>
<organism>
    <name type="scientific">Ichthyomyzon unicuspis</name>
    <name type="common">Silver lamprey</name>
    <dbReference type="NCBI Taxonomy" id="30308"/>
    <lineage>
        <taxon>Eukaryota</taxon>
        <taxon>Metazoa</taxon>
        <taxon>Chordata</taxon>
        <taxon>Craniata</taxon>
        <taxon>Vertebrata</taxon>
        <taxon>Cyclostomata</taxon>
        <taxon>Hyperoartia</taxon>
        <taxon>Petromyzontiformes</taxon>
        <taxon>Petromyzontidae</taxon>
        <taxon>Ichthyomyzon</taxon>
    </lineage>
</organism>
<comment type="function">
    <text>Precursor of the major egg-yolk proteins that are sources of nutrients during early development of oviparous organisms.</text>
</comment>
<comment type="tissue specificity">
    <text>Produced by the liver, secreted into the blood and then sequestered by receptor mediated endocytosis into growing oocytes, where it is generally cleaved, giving rise to the respective yolk components lipovitellins 1 and 2.</text>
</comment>
<comment type="induction">
    <text>By steroids (estrogen).</text>
</comment>
<comment type="PTM">
    <text>What corresponds to phosvitin in other species is lost during maturation of vitellogenin to lipovitellin.</text>
</comment>
<feature type="signal peptide" evidence="1">
    <location>
        <begin position="1"/>
        <end position="14"/>
    </location>
</feature>
<feature type="chain" id="PRO_0000041572" description="Vitellogenin">
    <location>
        <begin position="15"/>
        <end position="1823"/>
    </location>
</feature>
<feature type="chain" id="PRO_0000041573" description="Lipovitellin LV-1N">
    <location>
        <begin position="17"/>
        <end position="707"/>
    </location>
</feature>
<feature type="chain" id="PRO_0000041574" description="Lipovitellin LV-1C">
    <location>
        <begin position="708"/>
        <end position="1074"/>
    </location>
</feature>
<feature type="chain" id="PRO_0000041575" description="Lipovitellin LV-2">
    <location>
        <begin position="1306"/>
        <end position="1624"/>
    </location>
</feature>
<feature type="domain" description="Vitellogenin" evidence="2">
    <location>
        <begin position="18"/>
        <end position="658"/>
    </location>
</feature>
<feature type="domain" description="VWFD" evidence="3">
    <location>
        <begin position="1564"/>
        <end position="1732"/>
    </location>
</feature>
<feature type="region of interest" description="Disordered" evidence="4">
    <location>
        <begin position="953"/>
        <end position="986"/>
    </location>
</feature>
<feature type="region of interest" description="Disordered" evidence="4">
    <location>
        <begin position="1119"/>
        <end position="1289"/>
    </location>
</feature>
<feature type="region of interest" description="Disordered" evidence="4">
    <location>
        <begin position="1308"/>
        <end position="1351"/>
    </location>
</feature>
<feature type="compositionally biased region" description="Low complexity" evidence="4">
    <location>
        <begin position="958"/>
        <end position="976"/>
    </location>
</feature>
<feature type="compositionally biased region" description="Low complexity" evidence="4">
    <location>
        <begin position="1128"/>
        <end position="1149"/>
    </location>
</feature>
<feature type="compositionally biased region" description="Low complexity" evidence="4">
    <location>
        <begin position="1178"/>
        <end position="1192"/>
    </location>
</feature>
<feature type="compositionally biased region" description="Basic residues" evidence="4">
    <location>
        <begin position="1194"/>
        <end position="1206"/>
    </location>
</feature>
<feature type="compositionally biased region" description="Low complexity" evidence="4">
    <location>
        <begin position="1217"/>
        <end position="1238"/>
    </location>
</feature>
<feature type="compositionally biased region" description="Low complexity" evidence="4">
    <location>
        <begin position="1253"/>
        <end position="1286"/>
    </location>
</feature>
<feature type="compositionally biased region" description="Low complexity" evidence="4">
    <location>
        <begin position="1323"/>
        <end position="1344"/>
    </location>
</feature>
<feature type="modified residue" description="Pyrrolidone carboxylic acid" evidence="5">
    <location>
        <position position="17"/>
    </location>
</feature>
<feature type="glycosylation site" description="N-linked (GlcNAc...) asparagine" evidence="1">
    <location>
        <position position="1097"/>
    </location>
</feature>
<feature type="glycosylation site" description="N-linked (GlcNAc...) asparagine" evidence="1">
    <location>
        <position position="1298"/>
    </location>
</feature>
<feature type="glycosylation site" description="N-linked (GlcNAc...) asparagine" evidence="1">
    <location>
        <position position="1675"/>
    </location>
</feature>
<feature type="disulfide bond" evidence="3">
    <location>
        <begin position="1566"/>
        <end position="1695"/>
    </location>
</feature>
<feature type="disulfide bond" evidence="3">
    <location>
        <begin position="1589"/>
        <end position="1731"/>
    </location>
</feature>
<feature type="strand" evidence="6">
    <location>
        <begin position="22"/>
        <end position="35"/>
    </location>
</feature>
<feature type="strand" evidence="6">
    <location>
        <begin position="41"/>
        <end position="56"/>
    </location>
</feature>
<feature type="strand" evidence="6">
    <location>
        <begin position="58"/>
        <end position="80"/>
    </location>
</feature>
<feature type="strand" evidence="6">
    <location>
        <begin position="83"/>
        <end position="85"/>
    </location>
</feature>
<feature type="helix" evidence="6">
    <location>
        <begin position="91"/>
        <end position="97"/>
    </location>
</feature>
<feature type="strand" evidence="6">
    <location>
        <begin position="101"/>
        <end position="106"/>
    </location>
</feature>
<feature type="strand" evidence="6">
    <location>
        <begin position="109"/>
        <end position="114"/>
    </location>
</feature>
<feature type="helix" evidence="6">
    <location>
        <begin position="121"/>
        <end position="133"/>
    </location>
</feature>
<feature type="strand" evidence="6">
    <location>
        <begin position="143"/>
        <end position="151"/>
    </location>
</feature>
<feature type="strand" evidence="6">
    <location>
        <begin position="154"/>
        <end position="164"/>
    </location>
</feature>
<feature type="strand" evidence="6">
    <location>
        <begin position="166"/>
        <end position="185"/>
    </location>
</feature>
<feature type="strand" evidence="6">
    <location>
        <begin position="188"/>
        <end position="191"/>
    </location>
</feature>
<feature type="helix" evidence="6">
    <location>
        <begin position="199"/>
        <end position="204"/>
    </location>
</feature>
<feature type="strand" evidence="6">
    <location>
        <begin position="207"/>
        <end position="221"/>
    </location>
</feature>
<feature type="strand" evidence="6">
    <location>
        <begin position="224"/>
        <end position="238"/>
    </location>
</feature>
<feature type="helix" evidence="6">
    <location>
        <begin position="243"/>
        <end position="245"/>
    </location>
</feature>
<feature type="strand" evidence="6">
    <location>
        <begin position="248"/>
        <end position="263"/>
    </location>
</feature>
<feature type="helix" evidence="6">
    <location>
        <begin position="287"/>
        <end position="290"/>
    </location>
</feature>
<feature type="helix" evidence="6">
    <location>
        <begin position="302"/>
        <end position="316"/>
    </location>
</feature>
<feature type="strand" evidence="6">
    <location>
        <begin position="318"/>
        <end position="320"/>
    </location>
</feature>
<feature type="helix" evidence="6">
    <location>
        <begin position="325"/>
        <end position="336"/>
    </location>
</feature>
<feature type="helix" evidence="6">
    <location>
        <begin position="341"/>
        <end position="351"/>
    </location>
</feature>
<feature type="helix" evidence="6">
    <location>
        <begin position="355"/>
        <end position="368"/>
    </location>
</feature>
<feature type="helix" evidence="6">
    <location>
        <begin position="371"/>
        <end position="382"/>
    </location>
</feature>
<feature type="helix" evidence="6">
    <location>
        <begin position="388"/>
        <end position="400"/>
    </location>
</feature>
<feature type="helix" evidence="6">
    <location>
        <begin position="406"/>
        <end position="416"/>
    </location>
</feature>
<feature type="helix" evidence="6">
    <location>
        <begin position="419"/>
        <end position="422"/>
    </location>
</feature>
<feature type="helix" evidence="6">
    <location>
        <begin position="425"/>
        <end position="443"/>
    </location>
</feature>
<feature type="helix" evidence="6">
    <location>
        <begin position="451"/>
        <end position="453"/>
    </location>
</feature>
<feature type="helix" evidence="6">
    <location>
        <begin position="455"/>
        <end position="466"/>
    </location>
</feature>
<feature type="helix" evidence="6">
    <location>
        <begin position="470"/>
        <end position="483"/>
    </location>
</feature>
<feature type="helix" evidence="6">
    <location>
        <begin position="486"/>
        <end position="488"/>
    </location>
</feature>
<feature type="helix" evidence="6">
    <location>
        <begin position="489"/>
        <end position="493"/>
    </location>
</feature>
<feature type="strand" evidence="6">
    <location>
        <begin position="499"/>
        <end position="501"/>
    </location>
</feature>
<feature type="helix" evidence="6">
    <location>
        <begin position="508"/>
        <end position="516"/>
    </location>
</feature>
<feature type="turn" evidence="6">
    <location>
        <begin position="517"/>
        <end position="520"/>
    </location>
</feature>
<feature type="helix" evidence="6">
    <location>
        <begin position="521"/>
        <end position="523"/>
    </location>
</feature>
<feature type="helix" evidence="6">
    <location>
        <begin position="526"/>
        <end position="538"/>
    </location>
</feature>
<feature type="helix" evidence="6">
    <location>
        <begin position="544"/>
        <end position="556"/>
    </location>
</feature>
<feature type="helix" evidence="6">
    <location>
        <begin position="561"/>
        <end position="571"/>
    </location>
</feature>
<feature type="helix" evidence="6">
    <location>
        <begin position="577"/>
        <end position="590"/>
    </location>
</feature>
<feature type="helix" evidence="6">
    <location>
        <begin position="596"/>
        <end position="598"/>
    </location>
</feature>
<feature type="helix" evidence="6">
    <location>
        <begin position="599"/>
        <end position="609"/>
    </location>
</feature>
<feature type="helix" evidence="6">
    <location>
        <begin position="615"/>
        <end position="618"/>
    </location>
</feature>
<feature type="strand" evidence="6">
    <location>
        <begin position="625"/>
        <end position="633"/>
    </location>
</feature>
<feature type="turn" evidence="6">
    <location>
        <begin position="634"/>
        <end position="637"/>
    </location>
</feature>
<feature type="strand" evidence="6">
    <location>
        <begin position="638"/>
        <end position="649"/>
    </location>
</feature>
<feature type="strand" evidence="6">
    <location>
        <begin position="652"/>
        <end position="666"/>
    </location>
</feature>
<feature type="strand" evidence="6">
    <location>
        <begin position="669"/>
        <end position="679"/>
    </location>
</feature>
<feature type="helix" evidence="6">
    <location>
        <begin position="681"/>
        <end position="687"/>
    </location>
</feature>
<feature type="strand" evidence="6">
    <location>
        <begin position="738"/>
        <end position="745"/>
    </location>
</feature>
<feature type="strand" evidence="6">
    <location>
        <begin position="748"/>
        <end position="756"/>
    </location>
</feature>
<feature type="helix" evidence="6">
    <location>
        <begin position="779"/>
        <end position="789"/>
    </location>
</feature>
<feature type="strand" evidence="6">
    <location>
        <begin position="792"/>
        <end position="810"/>
    </location>
</feature>
<feature type="strand" evidence="6">
    <location>
        <begin position="814"/>
        <end position="836"/>
    </location>
</feature>
<feature type="helix" evidence="6">
    <location>
        <begin position="847"/>
        <end position="850"/>
    </location>
</feature>
<feature type="strand" evidence="6">
    <location>
        <begin position="855"/>
        <end position="876"/>
    </location>
</feature>
<feature type="strand" evidence="6">
    <location>
        <begin position="881"/>
        <end position="903"/>
    </location>
</feature>
<feature type="turn" evidence="6">
    <location>
        <begin position="904"/>
        <end position="907"/>
    </location>
</feature>
<feature type="strand" evidence="6">
    <location>
        <begin position="908"/>
        <end position="913"/>
    </location>
</feature>
<feature type="strand" evidence="6">
    <location>
        <begin position="920"/>
        <end position="935"/>
    </location>
</feature>
<feature type="strand" evidence="6">
    <location>
        <begin position="938"/>
        <end position="945"/>
    </location>
</feature>
<feature type="helix" evidence="6">
    <location>
        <begin position="996"/>
        <end position="1001"/>
    </location>
</feature>
<feature type="strand" evidence="6">
    <location>
        <begin position="1009"/>
        <end position="1013"/>
    </location>
</feature>
<feature type="turn" evidence="6">
    <location>
        <begin position="1018"/>
        <end position="1021"/>
    </location>
</feature>
<feature type="strand" evidence="6">
    <location>
        <begin position="1022"/>
        <end position="1033"/>
    </location>
</feature>
<feature type="turn" evidence="6">
    <location>
        <begin position="1034"/>
        <end position="1036"/>
    </location>
</feature>
<feature type="helix" evidence="6">
    <location>
        <begin position="1040"/>
        <end position="1043"/>
    </location>
</feature>
<feature type="strand" evidence="6">
    <location>
        <begin position="1045"/>
        <end position="1055"/>
    </location>
</feature>
<feature type="strand" evidence="6">
    <location>
        <begin position="1064"/>
        <end position="1069"/>
    </location>
</feature>
<feature type="strand" evidence="6">
    <location>
        <begin position="1360"/>
        <end position="1366"/>
    </location>
</feature>
<feature type="strand" evidence="6">
    <location>
        <begin position="1375"/>
        <end position="1383"/>
    </location>
</feature>
<feature type="turn" evidence="6">
    <location>
        <begin position="1385"/>
        <end position="1387"/>
    </location>
</feature>
<feature type="strand" evidence="6">
    <location>
        <begin position="1391"/>
        <end position="1399"/>
    </location>
</feature>
<feature type="strand" evidence="6">
    <location>
        <begin position="1406"/>
        <end position="1412"/>
    </location>
</feature>
<feature type="strand" evidence="6">
    <location>
        <begin position="1415"/>
        <end position="1429"/>
    </location>
</feature>
<feature type="strand" evidence="6">
    <location>
        <begin position="1431"/>
        <end position="1455"/>
    </location>
</feature>
<feature type="helix" evidence="6">
    <location>
        <begin position="1460"/>
        <end position="1471"/>
    </location>
</feature>
<feature type="helix" evidence="6">
    <location>
        <begin position="1473"/>
        <end position="1479"/>
    </location>
</feature>
<feature type="turn" evidence="6">
    <location>
        <begin position="1480"/>
        <end position="1482"/>
    </location>
</feature>
<feature type="strand" evidence="6">
    <location>
        <begin position="1484"/>
        <end position="1487"/>
    </location>
</feature>
<feature type="strand" evidence="6">
    <location>
        <begin position="1494"/>
        <end position="1503"/>
    </location>
</feature>
<feature type="strand" evidence="6">
    <location>
        <begin position="1506"/>
        <end position="1512"/>
    </location>
</feature>
<feature type="strand" evidence="6">
    <location>
        <begin position="1517"/>
        <end position="1524"/>
    </location>
</feature>